<comment type="function">
    <text evidence="1">Catalyzes the oxidation of 5,10-methylenetetrahydrofolate to 5,10-methenyltetrahydrofolate and then the hydrolysis of 5,10-methenyltetrahydrofolate to 10-formyltetrahydrofolate.</text>
</comment>
<comment type="catalytic activity">
    <reaction evidence="1">
        <text>(6R)-5,10-methylene-5,6,7,8-tetrahydrofolate + NADP(+) = (6R)-5,10-methenyltetrahydrofolate + NADPH</text>
        <dbReference type="Rhea" id="RHEA:22812"/>
        <dbReference type="ChEBI" id="CHEBI:15636"/>
        <dbReference type="ChEBI" id="CHEBI:57455"/>
        <dbReference type="ChEBI" id="CHEBI:57783"/>
        <dbReference type="ChEBI" id="CHEBI:58349"/>
        <dbReference type="EC" id="1.5.1.5"/>
    </reaction>
</comment>
<comment type="catalytic activity">
    <reaction evidence="1">
        <text>(6R)-5,10-methenyltetrahydrofolate + H2O = (6R)-10-formyltetrahydrofolate + H(+)</text>
        <dbReference type="Rhea" id="RHEA:23700"/>
        <dbReference type="ChEBI" id="CHEBI:15377"/>
        <dbReference type="ChEBI" id="CHEBI:15378"/>
        <dbReference type="ChEBI" id="CHEBI:57455"/>
        <dbReference type="ChEBI" id="CHEBI:195366"/>
        <dbReference type="EC" id="3.5.4.9"/>
    </reaction>
</comment>
<comment type="pathway">
    <text evidence="1">One-carbon metabolism; tetrahydrofolate interconversion.</text>
</comment>
<comment type="subunit">
    <text evidence="1">Homodimer.</text>
</comment>
<comment type="similarity">
    <text evidence="1">Belongs to the tetrahydrofolate dehydrogenase/cyclohydrolase family.</text>
</comment>
<gene>
    <name evidence="1" type="primary">folD</name>
    <name type="ordered locus">HD_1108</name>
</gene>
<protein>
    <recommendedName>
        <fullName evidence="1">Bifunctional protein FolD</fullName>
    </recommendedName>
    <domain>
        <recommendedName>
            <fullName evidence="1">Methylenetetrahydrofolate dehydrogenase</fullName>
            <ecNumber evidence="1">1.5.1.5</ecNumber>
        </recommendedName>
    </domain>
    <domain>
        <recommendedName>
            <fullName evidence="1">Methenyltetrahydrofolate cyclohydrolase</fullName>
            <ecNumber evidence="1">3.5.4.9</ecNumber>
        </recommendedName>
    </domain>
</protein>
<organism>
    <name type="scientific">Haemophilus ducreyi (strain 35000HP / ATCC 700724)</name>
    <dbReference type="NCBI Taxonomy" id="233412"/>
    <lineage>
        <taxon>Bacteria</taxon>
        <taxon>Pseudomonadati</taxon>
        <taxon>Pseudomonadota</taxon>
        <taxon>Gammaproteobacteria</taxon>
        <taxon>Pasteurellales</taxon>
        <taxon>Pasteurellaceae</taxon>
        <taxon>Haemophilus</taxon>
    </lineage>
</organism>
<sequence>MAAKIISGINIAKQIKQNIAQKIAQYIVNGYRRPGLAVILVGADPASQVYVNSKRKSCAEIGIESKYYDLPATITEVELLSIIQRLNSDEMIDGILVQLPLPEHINPIHITEAISSDKDVDGFHPYNVGRLCQKIPTLRSCTSYGVMKLLESTHIDLSGLHAVIVGASNIVGRPMAMELLLAGCTVTITHSRTKNLVDHLSSADIVIVGIGHPNFVKGEWLKQGAIVIDVGINRDTYSKKLVGDVDFLTAEAKASFITPVPGGVGPMTVAMLMQNTLQAYEHHLQAV</sequence>
<reference key="1">
    <citation type="submission" date="2003-06" db="EMBL/GenBank/DDBJ databases">
        <title>The complete genome sequence of Haemophilus ducreyi.</title>
        <authorList>
            <person name="Munson R.S. Jr."/>
            <person name="Ray W.C."/>
            <person name="Mahairas G."/>
            <person name="Sabo P."/>
            <person name="Mungur R."/>
            <person name="Johnson L."/>
            <person name="Nguyen D."/>
            <person name="Wang J."/>
            <person name="Forst C."/>
            <person name="Hood L."/>
        </authorList>
    </citation>
    <scope>NUCLEOTIDE SEQUENCE [LARGE SCALE GENOMIC DNA]</scope>
    <source>
        <strain>35000HP / ATCC 700724</strain>
    </source>
</reference>
<proteinExistence type="inferred from homology"/>
<name>FOLD_HAEDU</name>
<dbReference type="EC" id="1.5.1.5" evidence="1"/>
<dbReference type="EC" id="3.5.4.9" evidence="1"/>
<dbReference type="EMBL" id="AE017143">
    <property type="protein sequence ID" value="AAP95974.1"/>
    <property type="molecule type" value="Genomic_DNA"/>
</dbReference>
<dbReference type="RefSeq" id="WP_010945023.1">
    <property type="nucleotide sequence ID" value="NC_002940.2"/>
</dbReference>
<dbReference type="SMR" id="Q7VM86"/>
<dbReference type="STRING" id="233412.HD_1108"/>
<dbReference type="KEGG" id="hdu:HD_1108"/>
<dbReference type="eggNOG" id="COG0190">
    <property type="taxonomic scope" value="Bacteria"/>
</dbReference>
<dbReference type="HOGENOM" id="CLU_034045_2_1_6"/>
<dbReference type="OrthoDB" id="9803580at2"/>
<dbReference type="UniPathway" id="UPA00193"/>
<dbReference type="Proteomes" id="UP000001022">
    <property type="component" value="Chromosome"/>
</dbReference>
<dbReference type="GO" id="GO:0005829">
    <property type="term" value="C:cytosol"/>
    <property type="evidence" value="ECO:0007669"/>
    <property type="project" value="TreeGrafter"/>
</dbReference>
<dbReference type="GO" id="GO:0004477">
    <property type="term" value="F:methenyltetrahydrofolate cyclohydrolase activity"/>
    <property type="evidence" value="ECO:0007669"/>
    <property type="project" value="UniProtKB-UniRule"/>
</dbReference>
<dbReference type="GO" id="GO:0004488">
    <property type="term" value="F:methylenetetrahydrofolate dehydrogenase (NADP+) activity"/>
    <property type="evidence" value="ECO:0007669"/>
    <property type="project" value="UniProtKB-UniRule"/>
</dbReference>
<dbReference type="GO" id="GO:0000105">
    <property type="term" value="P:L-histidine biosynthetic process"/>
    <property type="evidence" value="ECO:0007669"/>
    <property type="project" value="UniProtKB-KW"/>
</dbReference>
<dbReference type="GO" id="GO:0009086">
    <property type="term" value="P:methionine biosynthetic process"/>
    <property type="evidence" value="ECO:0007669"/>
    <property type="project" value="UniProtKB-KW"/>
</dbReference>
<dbReference type="GO" id="GO:0006164">
    <property type="term" value="P:purine nucleotide biosynthetic process"/>
    <property type="evidence" value="ECO:0007669"/>
    <property type="project" value="UniProtKB-KW"/>
</dbReference>
<dbReference type="GO" id="GO:0035999">
    <property type="term" value="P:tetrahydrofolate interconversion"/>
    <property type="evidence" value="ECO:0007669"/>
    <property type="project" value="UniProtKB-UniRule"/>
</dbReference>
<dbReference type="CDD" id="cd01080">
    <property type="entry name" value="NAD_bind_m-THF_DH_Cyclohyd"/>
    <property type="match status" value="1"/>
</dbReference>
<dbReference type="FunFam" id="3.40.50.720:FF:000006">
    <property type="entry name" value="Bifunctional protein FolD"/>
    <property type="match status" value="1"/>
</dbReference>
<dbReference type="FunFam" id="3.40.50.10860:FF:000005">
    <property type="entry name" value="C-1-tetrahydrofolate synthase, cytoplasmic, putative"/>
    <property type="match status" value="1"/>
</dbReference>
<dbReference type="Gene3D" id="3.40.50.10860">
    <property type="entry name" value="Leucine Dehydrogenase, chain A, domain 1"/>
    <property type="match status" value="1"/>
</dbReference>
<dbReference type="Gene3D" id="3.40.50.720">
    <property type="entry name" value="NAD(P)-binding Rossmann-like Domain"/>
    <property type="match status" value="1"/>
</dbReference>
<dbReference type="HAMAP" id="MF_01576">
    <property type="entry name" value="THF_DHG_CYH"/>
    <property type="match status" value="1"/>
</dbReference>
<dbReference type="InterPro" id="IPR046346">
    <property type="entry name" value="Aminoacid_DH-like_N_sf"/>
</dbReference>
<dbReference type="InterPro" id="IPR036291">
    <property type="entry name" value="NAD(P)-bd_dom_sf"/>
</dbReference>
<dbReference type="InterPro" id="IPR000672">
    <property type="entry name" value="THF_DH/CycHdrlase"/>
</dbReference>
<dbReference type="InterPro" id="IPR020630">
    <property type="entry name" value="THF_DH/CycHdrlase_cat_dom"/>
</dbReference>
<dbReference type="InterPro" id="IPR020867">
    <property type="entry name" value="THF_DH/CycHdrlase_CS"/>
</dbReference>
<dbReference type="InterPro" id="IPR020631">
    <property type="entry name" value="THF_DH/CycHdrlase_NAD-bd_dom"/>
</dbReference>
<dbReference type="NCBIfam" id="NF008058">
    <property type="entry name" value="PRK10792.1"/>
    <property type="match status" value="1"/>
</dbReference>
<dbReference type="NCBIfam" id="NF010783">
    <property type="entry name" value="PRK14186.1"/>
    <property type="match status" value="1"/>
</dbReference>
<dbReference type="PANTHER" id="PTHR48099:SF5">
    <property type="entry name" value="C-1-TETRAHYDROFOLATE SYNTHASE, CYTOPLASMIC"/>
    <property type="match status" value="1"/>
</dbReference>
<dbReference type="PANTHER" id="PTHR48099">
    <property type="entry name" value="C-1-TETRAHYDROFOLATE SYNTHASE, CYTOPLASMIC-RELATED"/>
    <property type="match status" value="1"/>
</dbReference>
<dbReference type="Pfam" id="PF00763">
    <property type="entry name" value="THF_DHG_CYH"/>
    <property type="match status" value="1"/>
</dbReference>
<dbReference type="Pfam" id="PF02882">
    <property type="entry name" value="THF_DHG_CYH_C"/>
    <property type="match status" value="1"/>
</dbReference>
<dbReference type="PRINTS" id="PR00085">
    <property type="entry name" value="THFDHDRGNASE"/>
</dbReference>
<dbReference type="SUPFAM" id="SSF53223">
    <property type="entry name" value="Aminoacid dehydrogenase-like, N-terminal domain"/>
    <property type="match status" value="1"/>
</dbReference>
<dbReference type="SUPFAM" id="SSF51735">
    <property type="entry name" value="NAD(P)-binding Rossmann-fold domains"/>
    <property type="match status" value="1"/>
</dbReference>
<dbReference type="PROSITE" id="PS00766">
    <property type="entry name" value="THF_DHG_CYH_1"/>
    <property type="match status" value="1"/>
</dbReference>
<dbReference type="PROSITE" id="PS00767">
    <property type="entry name" value="THF_DHG_CYH_2"/>
    <property type="match status" value="1"/>
</dbReference>
<accession>Q7VM86</accession>
<feature type="chain" id="PRO_0000268364" description="Bifunctional protein FolD">
    <location>
        <begin position="1"/>
        <end position="287"/>
    </location>
</feature>
<feature type="binding site" evidence="1">
    <location>
        <begin position="166"/>
        <end position="168"/>
    </location>
    <ligand>
        <name>NADP(+)</name>
        <dbReference type="ChEBI" id="CHEBI:58349"/>
    </ligand>
</feature>
<feature type="binding site" evidence="1">
    <location>
        <position position="191"/>
    </location>
    <ligand>
        <name>NADP(+)</name>
        <dbReference type="ChEBI" id="CHEBI:58349"/>
    </ligand>
</feature>
<feature type="binding site" evidence="1">
    <location>
        <position position="232"/>
    </location>
    <ligand>
        <name>NADP(+)</name>
        <dbReference type="ChEBI" id="CHEBI:58349"/>
    </ligand>
</feature>
<evidence type="ECO:0000255" key="1">
    <source>
        <dbReference type="HAMAP-Rule" id="MF_01576"/>
    </source>
</evidence>
<keyword id="KW-0028">Amino-acid biosynthesis</keyword>
<keyword id="KW-0368">Histidine biosynthesis</keyword>
<keyword id="KW-0378">Hydrolase</keyword>
<keyword id="KW-0486">Methionine biosynthesis</keyword>
<keyword id="KW-0511">Multifunctional enzyme</keyword>
<keyword id="KW-0521">NADP</keyword>
<keyword id="KW-0554">One-carbon metabolism</keyword>
<keyword id="KW-0560">Oxidoreductase</keyword>
<keyword id="KW-0658">Purine biosynthesis</keyword>
<keyword id="KW-1185">Reference proteome</keyword>